<sequence>MCGIFAYLNFHANKERRYILDVLFNGLRRLEYRGYDSAGIAIDNSSPSSSPLVFRQAGNIESLVNSVNEEITNTDLNLDEVFYFHAGIAHTRWATHGEPAPRNSHPQSSGPGDDFLVVHNGVITNYEVLKETLVRHGFTFESDTDTEVIPKLAKFVFDKANEEGGQTVTFCEVVFEVMRHLEGAYALIFKSWHYPNELIACKLGSPLLLGVKELDQGESNSHVFQDAHFLSKNDHPKEFFLSSDPHALVEHTKKVLVIEDGEVVNLKDGGVSILKFENERGRCNGLSRPASVERALSVLEMEVEQISKGKYDHYMQKEIHEQPESLTTTMRGRLIRGGSRKTKTVLLGGLKDHLKTIRRSRRIVFIGCGTSYNAALASRPILEELSGIPVSMEIASDLWDRQGPIYREDTAVFVSQSGETADTLLALDYARENGALCVGITNTVGSSIARKTHCGVHINAGAEIGVASTKAYTSQIVVMVMLALAIGSDTISSQKRREAIIDGLLDLPYKVKEVLKLDDEMKDLAQLLIDEQSLLVFGRGYNYATALEGALKVKEVALMHSEGILAGEMKHGPLALVDENLPIAVIATRDACFSKQQSVIQQLHARKGRLIVMCSKGDAASVSSSGSCRAIEVPQVEDCLQPVINIVPLQLLAYHLTVLRGHNVDQPRNLAKSVTTQ</sequence>
<reference key="1">
    <citation type="journal article" date="2000" name="DNA Res.">
        <title>Structural analysis of Arabidopsis thaliana chromosome 3. II. Sequence features of the 4,251,695 bp regions covered by 90 P1, TAC and BAC clones.</title>
        <authorList>
            <person name="Kaneko T."/>
            <person name="Katoh T."/>
            <person name="Sato S."/>
            <person name="Nakamura Y."/>
            <person name="Asamizu E."/>
            <person name="Tabata S."/>
        </authorList>
    </citation>
    <scope>NUCLEOTIDE SEQUENCE [LARGE SCALE GENOMIC DNA]</scope>
    <source>
        <strain>cv. Columbia</strain>
    </source>
</reference>
<reference key="2">
    <citation type="journal article" date="2017" name="Plant J.">
        <title>Araport11: a complete reannotation of the Arabidopsis thaliana reference genome.</title>
        <authorList>
            <person name="Cheng C.Y."/>
            <person name="Krishnakumar V."/>
            <person name="Chan A.P."/>
            <person name="Thibaud-Nissen F."/>
            <person name="Schobel S."/>
            <person name="Town C.D."/>
        </authorList>
    </citation>
    <scope>GENOME REANNOTATION</scope>
    <source>
        <strain>cv. Columbia</strain>
    </source>
</reference>
<reference key="3">
    <citation type="journal article" date="2002" name="Insect Mol. Biol.">
        <title>Glucosamine:fructose-6-phosphate aminotransferase: gene characterization, chitin biosynthesis and peritrophic matrix formation in Aedes aegypti.</title>
        <authorList>
            <person name="Kato N."/>
            <person name="Dasgupta R."/>
            <person name="Smartt C.T."/>
            <person name="Christensen B.M."/>
        </authorList>
    </citation>
    <scope>GENE FAMILY</scope>
</reference>
<reference key="4">
    <citation type="journal article" date="2019" name="J. Exp. Bot.">
        <title>Deficiency of AtGFAT1 activity impairs growth, pollen germination and tolerance to tunicamycin in Arabidopsis.</title>
        <authorList>
            <person name="Vu K.V."/>
            <person name="Jeong C.Y."/>
            <person name="Nguyen T.T."/>
            <person name="Dinh T.T.H."/>
            <person name="Lee H."/>
            <person name="Hong S.-W."/>
        </authorList>
    </citation>
    <scope>FUNCTION</scope>
    <scope>DISRUPTION PHENOTYPE</scope>
    <scope>TISSUE SPECIFICITY</scope>
    <scope>DEVELOPMENTAL STAGE</scope>
    <scope>INDUCTION BY TUNICAMYCIN AND DITHIOTHREITOL</scope>
    <source>
        <strain>cv. Columbia</strain>
    </source>
</reference>
<organism>
    <name type="scientific">Arabidopsis thaliana</name>
    <name type="common">Mouse-ear cress</name>
    <dbReference type="NCBI Taxonomy" id="3702"/>
    <lineage>
        <taxon>Eukaryota</taxon>
        <taxon>Viridiplantae</taxon>
        <taxon>Streptophyta</taxon>
        <taxon>Embryophyta</taxon>
        <taxon>Tracheophyta</taxon>
        <taxon>Spermatophyta</taxon>
        <taxon>Magnoliopsida</taxon>
        <taxon>eudicotyledons</taxon>
        <taxon>Gunneridae</taxon>
        <taxon>Pentapetalae</taxon>
        <taxon>rosids</taxon>
        <taxon>malvids</taxon>
        <taxon>Brassicales</taxon>
        <taxon>Brassicaceae</taxon>
        <taxon>Camelineae</taxon>
        <taxon>Arabidopsis</taxon>
    </lineage>
</organism>
<protein>
    <recommendedName>
        <fullName evidence="8">Glutamine--fructose-6-phosphate aminotransferase [isomerizing] 1</fullName>
        <shortName evidence="7">AtGFAT</shortName>
        <shortName evidence="8">AtGFAT1</shortName>
        <shortName evidence="8">Glutamine:fructose-6-phosphate amidotransferase 1</shortName>
        <ecNumber evidence="2">2.6.1.16</ecNumber>
    </recommendedName>
    <alternativeName>
        <fullName evidence="9">D-fructose-6-phosphate amidotransferase GFAT1</fullName>
    </alternativeName>
    <alternativeName>
        <fullName evidence="9">Hexosephosphate aminotransferase GFAT1</fullName>
    </alternativeName>
</protein>
<dbReference type="EC" id="2.6.1.16" evidence="2"/>
<dbReference type="EMBL" id="AP001297">
    <property type="protein sequence ID" value="BAB03027.1"/>
    <property type="molecule type" value="Genomic_DNA"/>
</dbReference>
<dbReference type="EMBL" id="CP002686">
    <property type="protein sequence ID" value="AEE76855.1"/>
    <property type="molecule type" value="Genomic_DNA"/>
</dbReference>
<dbReference type="SMR" id="Q9LIP9"/>
<dbReference type="FunCoup" id="Q9LIP9">
    <property type="interactions" value="2579"/>
</dbReference>
<dbReference type="IntAct" id="Q9LIP9">
    <property type="interactions" value="1"/>
</dbReference>
<dbReference type="STRING" id="3702.Q9LIP9"/>
<dbReference type="PaxDb" id="3702-AT3G24090.1"/>
<dbReference type="ProteomicsDB" id="175679"/>
<dbReference type="EnsemblPlants" id="AT3G24090.1">
    <property type="protein sequence ID" value="AT3G24090.1"/>
    <property type="gene ID" value="AT3G24090"/>
</dbReference>
<dbReference type="Gramene" id="AT3G24090.1">
    <property type="protein sequence ID" value="AT3G24090.1"/>
    <property type="gene ID" value="AT3G24090"/>
</dbReference>
<dbReference type="KEGG" id="ath:AT3G24090"/>
<dbReference type="Araport" id="AT3G24090"/>
<dbReference type="TAIR" id="AT3G24090">
    <property type="gene designation" value="GFAT"/>
</dbReference>
<dbReference type="eggNOG" id="KOG1268">
    <property type="taxonomic scope" value="Eukaryota"/>
</dbReference>
<dbReference type="HOGENOM" id="CLU_012520_5_0_1"/>
<dbReference type="InParanoid" id="Q9LIP9"/>
<dbReference type="OMA" id="GCTAKYW"/>
<dbReference type="OrthoDB" id="15235at2759"/>
<dbReference type="PhylomeDB" id="Q9LIP9"/>
<dbReference type="UniPathway" id="UPA00113">
    <property type="reaction ID" value="UER00528"/>
</dbReference>
<dbReference type="PRO" id="PR:Q9LIP9"/>
<dbReference type="Proteomes" id="UP000006548">
    <property type="component" value="Chromosome 3"/>
</dbReference>
<dbReference type="ExpressionAtlas" id="Q9LIP9">
    <property type="expression patterns" value="baseline and differential"/>
</dbReference>
<dbReference type="GO" id="GO:0097367">
    <property type="term" value="F:carbohydrate derivative binding"/>
    <property type="evidence" value="ECO:0007669"/>
    <property type="project" value="InterPro"/>
</dbReference>
<dbReference type="GO" id="GO:0004360">
    <property type="term" value="F:glutamine-fructose-6-phosphate transaminase (isomerizing) activity"/>
    <property type="evidence" value="ECO:0007669"/>
    <property type="project" value="UniProtKB-EC"/>
</dbReference>
<dbReference type="GO" id="GO:0006541">
    <property type="term" value="P:glutamine metabolic process"/>
    <property type="evidence" value="ECO:0000315"/>
    <property type="project" value="UniProtKB"/>
</dbReference>
<dbReference type="GO" id="GO:0010208">
    <property type="term" value="P:pollen wall assembly"/>
    <property type="evidence" value="ECO:0000315"/>
    <property type="project" value="UniProtKB"/>
</dbReference>
<dbReference type="GO" id="GO:0006487">
    <property type="term" value="P:protein N-linked glycosylation"/>
    <property type="evidence" value="ECO:0000315"/>
    <property type="project" value="UniProtKB"/>
</dbReference>
<dbReference type="GO" id="GO:0072720">
    <property type="term" value="P:response to dithiothreitol"/>
    <property type="evidence" value="ECO:0000270"/>
    <property type="project" value="UniProtKB"/>
</dbReference>
<dbReference type="GO" id="GO:0034976">
    <property type="term" value="P:response to endoplasmic reticulum stress"/>
    <property type="evidence" value="ECO:0000315"/>
    <property type="project" value="UniProtKB"/>
</dbReference>
<dbReference type="GO" id="GO:0006048">
    <property type="term" value="P:UDP-N-acetylglucosamine biosynthetic process"/>
    <property type="evidence" value="ECO:0007669"/>
    <property type="project" value="UniProtKB-UniPathway"/>
</dbReference>
<dbReference type="GO" id="GO:0006047">
    <property type="term" value="P:UDP-N-acetylglucosamine metabolic process"/>
    <property type="evidence" value="ECO:0000315"/>
    <property type="project" value="UniProtKB"/>
</dbReference>
<dbReference type="CDD" id="cd00714">
    <property type="entry name" value="GFAT"/>
    <property type="match status" value="1"/>
</dbReference>
<dbReference type="CDD" id="cd05008">
    <property type="entry name" value="SIS_GlmS_GlmD_1"/>
    <property type="match status" value="1"/>
</dbReference>
<dbReference type="CDD" id="cd05009">
    <property type="entry name" value="SIS_GlmS_GlmD_2"/>
    <property type="match status" value="1"/>
</dbReference>
<dbReference type="FunFam" id="3.40.50.10490:FF:000001">
    <property type="entry name" value="Glutamine--fructose-6-phosphate aminotransferase [isomerizing]"/>
    <property type="match status" value="1"/>
</dbReference>
<dbReference type="FunFam" id="3.60.20.10:FF:000052">
    <property type="entry name" value="Glutamine--fructose-6-phosphate aminotransferase [isomerizing] 2"/>
    <property type="match status" value="1"/>
</dbReference>
<dbReference type="Gene3D" id="3.40.50.10490">
    <property type="entry name" value="Glucose-6-phosphate isomerase like protein, domain 1"/>
    <property type="match status" value="2"/>
</dbReference>
<dbReference type="Gene3D" id="3.60.20.10">
    <property type="entry name" value="Glutamine Phosphoribosylpyrophosphate, subunit 1, domain 1"/>
    <property type="match status" value="1"/>
</dbReference>
<dbReference type="InterPro" id="IPR017932">
    <property type="entry name" value="GATase_2_dom"/>
</dbReference>
<dbReference type="InterPro" id="IPR005855">
    <property type="entry name" value="GFAT"/>
</dbReference>
<dbReference type="InterPro" id="IPR047084">
    <property type="entry name" value="GFAT_N"/>
</dbReference>
<dbReference type="InterPro" id="IPR035466">
    <property type="entry name" value="GlmS/AgaS_SIS"/>
</dbReference>
<dbReference type="InterPro" id="IPR035490">
    <property type="entry name" value="GlmS/FrlB_SIS"/>
</dbReference>
<dbReference type="InterPro" id="IPR029055">
    <property type="entry name" value="Ntn_hydrolases_N"/>
</dbReference>
<dbReference type="InterPro" id="IPR001347">
    <property type="entry name" value="SIS_dom"/>
</dbReference>
<dbReference type="InterPro" id="IPR046348">
    <property type="entry name" value="SIS_dom_sf"/>
</dbReference>
<dbReference type="NCBIfam" id="TIGR01135">
    <property type="entry name" value="glmS"/>
    <property type="match status" value="1"/>
</dbReference>
<dbReference type="NCBIfam" id="NF001484">
    <property type="entry name" value="PRK00331.1"/>
    <property type="match status" value="1"/>
</dbReference>
<dbReference type="PANTHER" id="PTHR10937">
    <property type="entry name" value="GLUCOSAMINE--FRUCTOSE-6-PHOSPHATE AMINOTRANSFERASE, ISOMERIZING"/>
    <property type="match status" value="1"/>
</dbReference>
<dbReference type="PANTHER" id="PTHR10937:SF0">
    <property type="entry name" value="GLUTAMINE--FRUCTOSE-6-PHOSPHATE TRANSAMINASE (ISOMERIZING)"/>
    <property type="match status" value="1"/>
</dbReference>
<dbReference type="Pfam" id="PF13522">
    <property type="entry name" value="GATase_6"/>
    <property type="match status" value="1"/>
</dbReference>
<dbReference type="Pfam" id="PF01380">
    <property type="entry name" value="SIS"/>
    <property type="match status" value="2"/>
</dbReference>
<dbReference type="SUPFAM" id="SSF56235">
    <property type="entry name" value="N-terminal nucleophile aminohydrolases (Ntn hydrolases)"/>
    <property type="match status" value="1"/>
</dbReference>
<dbReference type="SUPFAM" id="SSF53697">
    <property type="entry name" value="SIS domain"/>
    <property type="match status" value="1"/>
</dbReference>
<dbReference type="PROSITE" id="PS51278">
    <property type="entry name" value="GATASE_TYPE_2"/>
    <property type="match status" value="1"/>
</dbReference>
<dbReference type="PROSITE" id="PS51464">
    <property type="entry name" value="SIS"/>
    <property type="match status" value="2"/>
</dbReference>
<comment type="function">
    <text evidence="6">Controls the flux of glucose into the hexosamine biosynthetic pathway (HBP) leading to glucosamine (GlcN) content homeostasis (PubMed:30775776). Involved in regulating the availability of precursors for N- and O-linked glycosylation of proteins (PubMed:30775776). Required during pollen maturation and pollen tube formation by triggering polar deposition of pectin and callose in the pollen cell wall (PubMed:30775776). Promotes tolerance to tunicamycin (Tm), an inhibitor of proteins N-glycosylation in endoplasmic reticulum (ER) (PubMed:30775776).</text>
</comment>
<comment type="catalytic activity">
    <reaction evidence="2">
        <text>D-fructose 6-phosphate + L-glutamine = D-glucosamine 6-phosphate + L-glutamate</text>
        <dbReference type="Rhea" id="RHEA:13237"/>
        <dbReference type="ChEBI" id="CHEBI:29985"/>
        <dbReference type="ChEBI" id="CHEBI:58359"/>
        <dbReference type="ChEBI" id="CHEBI:58725"/>
        <dbReference type="ChEBI" id="CHEBI:61527"/>
        <dbReference type="EC" id="2.6.1.16"/>
    </reaction>
</comment>
<comment type="pathway">
    <text evidence="2">Nucleotide-sugar biosynthesis; UDP-N-acetyl-alpha-D-glucosamine biosynthesis; alpha-D-glucosamine 6-phosphate from D-fructose 6-phosphate: step 1/1.</text>
</comment>
<comment type="subunit">
    <text evidence="1 3">Homotetramer, may also exist as homodimers.</text>
</comment>
<comment type="tissue specificity">
    <text evidence="6">Highly expressed in flowers specifically in mature anthers, mature pollen grains and pollen tubes (PubMed:30775776). Barely observed in roots, leaves and stems (PubMed:30775776).</text>
</comment>
<comment type="developmental stage">
    <text evidence="6">During flower development, first observed in the late tricellular pollen grains.</text>
</comment>
<comment type="induction">
    <text evidence="6">Accumulates in response to tunicamycin (Tm, inhibitor of proteins N-glycosylation in endoplasmic reticulum) and dithiothreitol (DTT, reducing agent that blocks disulfide-bond formation of cytosolic and ER proteins).</text>
</comment>
<comment type="disruption phenotype">
    <text evidence="6">Male gametophytic sterility (PubMed:30775776). Impaired growth and pollen germination associated with reduced glucosamine (GlcN) content, and lower tolerance to tunicamycin (Tm) (PubMed:30775776). Mutant plants exhibit also reactive oxygen species (ROS) production, cell death and a decrease in protein N-glycosylation (PubMed:30775776). Abnormal pollen grains due to defects in a polar deposition of pectin and callose in the pollen cell wall (PubMed:30775776). These phenotypes are suppressed by GlcN supplementation (PubMed:30775776).</text>
</comment>
<name>GFAT1_ARATH</name>
<keyword id="KW-0032">Aminotransferase</keyword>
<keyword id="KW-0119">Carbohydrate metabolism</keyword>
<keyword id="KW-0315">Glutamine amidotransferase</keyword>
<keyword id="KW-1185">Reference proteome</keyword>
<keyword id="KW-0677">Repeat</keyword>
<keyword id="KW-0808">Transferase</keyword>
<evidence type="ECO:0000250" key="1">
    <source>
        <dbReference type="UniProtKB" id="P53704"/>
    </source>
</evidence>
<evidence type="ECO:0000250" key="2">
    <source>
        <dbReference type="UniProtKB" id="P82808"/>
    </source>
</evidence>
<evidence type="ECO:0000250" key="3">
    <source>
        <dbReference type="UniProtKB" id="Q06210"/>
    </source>
</evidence>
<evidence type="ECO:0000255" key="4">
    <source>
        <dbReference type="PROSITE-ProRule" id="PRU00609"/>
    </source>
</evidence>
<evidence type="ECO:0000255" key="5">
    <source>
        <dbReference type="PROSITE-ProRule" id="PRU00797"/>
    </source>
</evidence>
<evidence type="ECO:0000269" key="6">
    <source>
    </source>
</evidence>
<evidence type="ECO:0000303" key="7">
    <source>
    </source>
</evidence>
<evidence type="ECO:0000303" key="8">
    <source>
    </source>
</evidence>
<evidence type="ECO:0000305" key="9"/>
<evidence type="ECO:0000312" key="10">
    <source>
        <dbReference type="Araport" id="AT3G24090"/>
    </source>
</evidence>
<evidence type="ECO:0000312" key="11">
    <source>
        <dbReference type="EMBL" id="BAB03027.1"/>
    </source>
</evidence>
<proteinExistence type="evidence at transcript level"/>
<feature type="initiator methionine" description="Removed" evidence="2">
    <location>
        <position position="1"/>
    </location>
</feature>
<feature type="chain" id="PRO_0000453197" description="Glutamine--fructose-6-phosphate aminotransferase [isomerizing] 1">
    <location>
        <begin position="2"/>
        <end position="677"/>
    </location>
</feature>
<feature type="domain" description="Glutamine amidotransferase type-2" evidence="4">
    <location>
        <begin position="2"/>
        <end position="269"/>
    </location>
</feature>
<feature type="domain" description="SIS 1" evidence="5">
    <location>
        <begin position="353"/>
        <end position="492"/>
    </location>
</feature>
<feature type="domain" description="SIS 2" evidence="5">
    <location>
        <begin position="524"/>
        <end position="667"/>
    </location>
</feature>
<feature type="active site" description="Nucleophile" evidence="4">
    <location>
        <position position="2"/>
    </location>
</feature>
<feature type="binding site" evidence="3">
    <location>
        <begin position="370"/>
        <end position="371"/>
    </location>
    <ligand>
        <name>substrate</name>
    </ligand>
</feature>
<feature type="binding site" evidence="3">
    <location>
        <begin position="415"/>
        <end position="417"/>
    </location>
    <ligand>
        <name>substrate</name>
    </ligand>
</feature>
<feature type="binding site" evidence="3">
    <location>
        <position position="420"/>
    </location>
    <ligand>
        <name>substrate</name>
    </ligand>
</feature>
<feature type="binding site" evidence="3">
    <location>
        <position position="571"/>
    </location>
    <ligand>
        <name>substrate</name>
    </ligand>
</feature>
<gene>
    <name evidence="8" type="primary">GFAT1</name>
    <name evidence="10" type="ordered locus">At3g24090</name>
    <name evidence="11" type="ORF">F14O13.29</name>
</gene>
<accession>Q9LIP9</accession>
<accession>A0A178V979</accession>